<accession>Q5R7R6</accession>
<gene>
    <name type="primary">COG4</name>
</gene>
<name>COG4_PONAB</name>
<protein>
    <recommendedName>
        <fullName>Conserved oligomeric Golgi complex subunit 4</fullName>
        <shortName>COG complex subunit 4</shortName>
    </recommendedName>
    <alternativeName>
        <fullName>Component of oligomeric Golgi complex 4</fullName>
    </alternativeName>
</protein>
<sequence length="785" mass="89171">MADFDSPPKLSGVQPPSEGVGGGRCSEISAELIRSLTELQELETVYERLCGEEKVVERELDALLEQQNTIESKMVTLHRMGPNLQLIEGDAKQLAGMITFTCNLAENVSSKVRQLDLAKNRLYQAIQRADDILDLKFCMDGVQTALRNEDYEQAAAHIHRYLCLDKSVIELSRQGKEGSMIDANLKLLQEAEQRLKAIVAEKFAVATKEGDLPQVERFFKIFPLLGLHEEGLRKFSEYLCKQVASKAEENLLMVLGTDMSDRRAAVIFADTLTLLFEGIARIVETHQPIVETYYGPGRLYTLIKYLQVECDRQVEKVVDKFIKQRDYHQQFRHVQNNLMRNSTTEKIEPRELDPILTEVTLMNARSELYLRFLKKRISSDFEVGDSMASEEVKQEHQKCLDKLLNNCLLSCTMQELIGLYVTMEEYFMRETVNKAVALDTYEKGQLTSSMVDDVFYIVKKCIGRALSSSSIDCLCAMINLATTELESDFRDVLCNKLRMGFPATTFQDIQRGVTSAVNIMHSSLQQGKFDTKGIESTDEAKMSFLVTLNNVEVCSENISTLKKTLESDCTKLFSQGIGGEQAQAKFDSCLSDLAAVSNKFRDLLQEGLTELNSTAIKPQVQPWINSFFSVSHNIEEEEFNDYEANDPWVQQFILNLEQQMAEFKASLSPVIYDSLTGLMTSLVTVELEKVVLKSTFNRLGGLQFDKELRSLIAYLTTVTTWTIRDKFARLSQMATILNLERVTEILDYWGPNSGPLTWRLTPAEVRQVLALRIDFRSEDIKRLRL</sequence>
<reference key="1">
    <citation type="submission" date="2004-11" db="EMBL/GenBank/DDBJ databases">
        <authorList>
            <consortium name="The German cDNA consortium"/>
        </authorList>
    </citation>
    <scope>NUCLEOTIDE SEQUENCE [LARGE SCALE MRNA]</scope>
    <source>
        <tissue>Liver</tissue>
    </source>
</reference>
<organism>
    <name type="scientific">Pongo abelii</name>
    <name type="common">Sumatran orangutan</name>
    <name type="synonym">Pongo pygmaeus abelii</name>
    <dbReference type="NCBI Taxonomy" id="9601"/>
    <lineage>
        <taxon>Eukaryota</taxon>
        <taxon>Metazoa</taxon>
        <taxon>Chordata</taxon>
        <taxon>Craniata</taxon>
        <taxon>Vertebrata</taxon>
        <taxon>Euteleostomi</taxon>
        <taxon>Mammalia</taxon>
        <taxon>Eutheria</taxon>
        <taxon>Euarchontoglires</taxon>
        <taxon>Primates</taxon>
        <taxon>Haplorrhini</taxon>
        <taxon>Catarrhini</taxon>
        <taxon>Hominidae</taxon>
        <taxon>Pongo</taxon>
    </lineage>
</organism>
<keyword id="KW-0007">Acetylation</keyword>
<keyword id="KW-0963">Cytoplasm</keyword>
<keyword id="KW-0333">Golgi apparatus</keyword>
<keyword id="KW-0472">Membrane</keyword>
<keyword id="KW-0597">Phosphoprotein</keyword>
<keyword id="KW-0653">Protein transport</keyword>
<keyword id="KW-1185">Reference proteome</keyword>
<keyword id="KW-0813">Transport</keyword>
<evidence type="ECO:0000250" key="1">
    <source>
        <dbReference type="UniProtKB" id="Q9H9E3"/>
    </source>
</evidence>
<evidence type="ECO:0000256" key="2">
    <source>
        <dbReference type="SAM" id="MobiDB-lite"/>
    </source>
</evidence>
<evidence type="ECO:0000305" key="3"/>
<dbReference type="EMBL" id="CR860044">
    <property type="protein sequence ID" value="CAH92194.1"/>
    <property type="molecule type" value="mRNA"/>
</dbReference>
<dbReference type="RefSeq" id="NP_001126284.1">
    <property type="nucleotide sequence ID" value="NM_001132812.1"/>
</dbReference>
<dbReference type="SMR" id="Q5R7R6"/>
<dbReference type="FunCoup" id="Q5R7R6">
    <property type="interactions" value="2701"/>
</dbReference>
<dbReference type="STRING" id="9601.ENSPPYP00000008512"/>
<dbReference type="GeneID" id="100173259"/>
<dbReference type="KEGG" id="pon:100173259"/>
<dbReference type="CTD" id="25839"/>
<dbReference type="eggNOG" id="KOG0412">
    <property type="taxonomic scope" value="Eukaryota"/>
</dbReference>
<dbReference type="InParanoid" id="Q5R7R6"/>
<dbReference type="OrthoDB" id="47059at2759"/>
<dbReference type="Proteomes" id="UP000001595">
    <property type="component" value="Unplaced"/>
</dbReference>
<dbReference type="GO" id="GO:0005829">
    <property type="term" value="C:cytosol"/>
    <property type="evidence" value="ECO:0007669"/>
    <property type="project" value="UniProtKB-SubCell"/>
</dbReference>
<dbReference type="GO" id="GO:0000139">
    <property type="term" value="C:Golgi membrane"/>
    <property type="evidence" value="ECO:0007669"/>
    <property type="project" value="UniProtKB-SubCell"/>
</dbReference>
<dbReference type="GO" id="GO:0017119">
    <property type="term" value="C:Golgi transport complex"/>
    <property type="evidence" value="ECO:0007669"/>
    <property type="project" value="TreeGrafter"/>
</dbReference>
<dbReference type="GO" id="GO:0007030">
    <property type="term" value="P:Golgi organization"/>
    <property type="evidence" value="ECO:0007669"/>
    <property type="project" value="TreeGrafter"/>
</dbReference>
<dbReference type="GO" id="GO:0015031">
    <property type="term" value="P:protein transport"/>
    <property type="evidence" value="ECO:0007669"/>
    <property type="project" value="UniProtKB-KW"/>
</dbReference>
<dbReference type="GO" id="GO:0006890">
    <property type="term" value="P:retrograde vesicle-mediated transport, Golgi to endoplasmic reticulum"/>
    <property type="evidence" value="ECO:0007669"/>
    <property type="project" value="TreeGrafter"/>
</dbReference>
<dbReference type="FunFam" id="1.10.287.1060:FF:000002">
    <property type="entry name" value="Conserved oligomeric Golgi complex subunit 4"/>
    <property type="match status" value="1"/>
</dbReference>
<dbReference type="FunFam" id="1.20.58.1970:FF:000001">
    <property type="entry name" value="Conserved oligomeric Golgi complex subunit 4"/>
    <property type="match status" value="1"/>
</dbReference>
<dbReference type="Gene3D" id="1.20.58.1970">
    <property type="match status" value="1"/>
</dbReference>
<dbReference type="Gene3D" id="1.10.287.1060">
    <property type="entry name" value="ESAT-6-like"/>
    <property type="match status" value="1"/>
</dbReference>
<dbReference type="InterPro" id="IPR048682">
    <property type="entry name" value="COG4"/>
</dbReference>
<dbReference type="InterPro" id="IPR048684">
    <property type="entry name" value="COG4_C"/>
</dbReference>
<dbReference type="InterPro" id="IPR013167">
    <property type="entry name" value="COG4_M"/>
</dbReference>
<dbReference type="InterPro" id="IPR048680">
    <property type="entry name" value="COG4_N"/>
</dbReference>
<dbReference type="PANTHER" id="PTHR24016">
    <property type="entry name" value="CONSERVED OLIGOMERIC GOLGI COMPLEX SUBUNIT 4"/>
    <property type="match status" value="1"/>
</dbReference>
<dbReference type="PANTHER" id="PTHR24016:SF0">
    <property type="entry name" value="CONSERVED OLIGOMERIC GOLGI COMPLEX SUBUNIT 4"/>
    <property type="match status" value="1"/>
</dbReference>
<dbReference type="Pfam" id="PF20662">
    <property type="entry name" value="COG4_C"/>
    <property type="match status" value="1"/>
</dbReference>
<dbReference type="Pfam" id="PF08318">
    <property type="entry name" value="COG4_m"/>
    <property type="match status" value="1"/>
</dbReference>
<dbReference type="Pfam" id="PF20663">
    <property type="entry name" value="COG4_N"/>
    <property type="match status" value="1"/>
</dbReference>
<dbReference type="SMART" id="SM00762">
    <property type="entry name" value="Cog4"/>
    <property type="match status" value="1"/>
</dbReference>
<comment type="function">
    <text evidence="1">Required for normal Golgi function. Plays a role in SNARE-pin assembly and Golgi-to-ER retrograde transport via its interaction with SCFD1.</text>
</comment>
<comment type="subunit">
    <text evidence="1">Monomer. Component of the conserved oligomeric Golgi (COG) complex which is composed of eight different subunits and is required for normal Golgi morphology and localization. Mediates interaction of SCFD1 with the COG complex. Interacts with STX5.</text>
</comment>
<comment type="subcellular location">
    <subcellularLocation>
        <location evidence="1">Cytoplasm</location>
        <location evidence="1">Cytosol</location>
    </subcellularLocation>
    <subcellularLocation>
        <location evidence="1">Golgi apparatus membrane</location>
        <topology evidence="1">Peripheral membrane protein</topology>
        <orientation evidence="1">Cytoplasmic side</orientation>
    </subcellularLocation>
</comment>
<comment type="similarity">
    <text evidence="3">Belongs to the COG4 family.</text>
</comment>
<feature type="initiator methionine" description="Removed" evidence="1">
    <location>
        <position position="1"/>
    </location>
</feature>
<feature type="chain" id="PRO_0000339133" description="Conserved oligomeric Golgi complex subunit 4">
    <location>
        <begin position="2"/>
        <end position="785"/>
    </location>
</feature>
<feature type="region of interest" description="Disordered" evidence="2">
    <location>
        <begin position="1"/>
        <end position="24"/>
    </location>
</feature>
<feature type="region of interest" description="Interaction with SCFD1" evidence="1">
    <location>
        <begin position="2"/>
        <end position="84"/>
    </location>
</feature>
<feature type="region of interest" description="Interaction with STX5" evidence="1">
    <location>
        <begin position="85"/>
        <end position="153"/>
    </location>
</feature>
<feature type="region of interest" description="D domain" evidence="1">
    <location>
        <begin position="618"/>
        <end position="740"/>
    </location>
</feature>
<feature type="region of interest" description="E domain; essential for proper cell surface glycosylation" evidence="1">
    <location>
        <begin position="741"/>
        <end position="785"/>
    </location>
</feature>
<feature type="modified residue" description="N-acetylalanine" evidence="1">
    <location>
        <position position="2"/>
    </location>
</feature>
<feature type="modified residue" description="Phosphoserine" evidence="1">
    <location>
        <position position="6"/>
    </location>
</feature>
<proteinExistence type="evidence at transcript level"/>